<reference key="1">
    <citation type="submission" date="2007-08" db="EMBL/GenBank/DDBJ databases">
        <title>Complete sequence of Roseiflexus castenholzii DSM 13941.</title>
        <authorList>
            <consortium name="US DOE Joint Genome Institute"/>
            <person name="Copeland A."/>
            <person name="Lucas S."/>
            <person name="Lapidus A."/>
            <person name="Barry K."/>
            <person name="Glavina del Rio T."/>
            <person name="Dalin E."/>
            <person name="Tice H."/>
            <person name="Pitluck S."/>
            <person name="Thompson L.S."/>
            <person name="Brettin T."/>
            <person name="Bruce D."/>
            <person name="Detter J.C."/>
            <person name="Han C."/>
            <person name="Tapia R."/>
            <person name="Schmutz J."/>
            <person name="Larimer F."/>
            <person name="Land M."/>
            <person name="Hauser L."/>
            <person name="Kyrpides N."/>
            <person name="Mikhailova N."/>
            <person name="Bryant D.A."/>
            <person name="Hanada S."/>
            <person name="Tsukatani Y."/>
            <person name="Richardson P."/>
        </authorList>
    </citation>
    <scope>NUCLEOTIDE SEQUENCE [LARGE SCALE GENOMIC DNA]</scope>
    <source>
        <strain>DSM 13941 / HLO8</strain>
    </source>
</reference>
<proteinExistence type="inferred from homology"/>
<comment type="function">
    <text evidence="1">Catalyzes the condensation of carbamoyl phosphate and aspartate to form carbamoyl aspartate and inorganic phosphate, the committed step in the de novo pyrimidine nucleotide biosynthesis pathway.</text>
</comment>
<comment type="catalytic activity">
    <reaction evidence="1">
        <text>carbamoyl phosphate + L-aspartate = N-carbamoyl-L-aspartate + phosphate + H(+)</text>
        <dbReference type="Rhea" id="RHEA:20013"/>
        <dbReference type="ChEBI" id="CHEBI:15378"/>
        <dbReference type="ChEBI" id="CHEBI:29991"/>
        <dbReference type="ChEBI" id="CHEBI:32814"/>
        <dbReference type="ChEBI" id="CHEBI:43474"/>
        <dbReference type="ChEBI" id="CHEBI:58228"/>
        <dbReference type="EC" id="2.1.3.2"/>
    </reaction>
</comment>
<comment type="pathway">
    <text evidence="1">Pyrimidine metabolism; UMP biosynthesis via de novo pathway; (S)-dihydroorotate from bicarbonate: step 2/3.</text>
</comment>
<comment type="subunit">
    <text evidence="1">Heterododecamer (2C3:3R2) of six catalytic PyrB chains organized as two trimers (C3), and six regulatory PyrI chains organized as three dimers (R2).</text>
</comment>
<comment type="similarity">
    <text evidence="1">Belongs to the aspartate/ornithine carbamoyltransferase superfamily. ATCase family.</text>
</comment>
<feature type="chain" id="PRO_1000073739" description="Aspartate carbamoyltransferase catalytic subunit">
    <location>
        <begin position="1"/>
        <end position="318"/>
    </location>
</feature>
<feature type="binding site" evidence="1">
    <location>
        <position position="67"/>
    </location>
    <ligand>
        <name>carbamoyl phosphate</name>
        <dbReference type="ChEBI" id="CHEBI:58228"/>
    </ligand>
</feature>
<feature type="binding site" evidence="1">
    <location>
        <position position="68"/>
    </location>
    <ligand>
        <name>carbamoyl phosphate</name>
        <dbReference type="ChEBI" id="CHEBI:58228"/>
    </ligand>
</feature>
<feature type="binding site" evidence="1">
    <location>
        <position position="95"/>
    </location>
    <ligand>
        <name>L-aspartate</name>
        <dbReference type="ChEBI" id="CHEBI:29991"/>
    </ligand>
</feature>
<feature type="binding site" evidence="1">
    <location>
        <position position="117"/>
    </location>
    <ligand>
        <name>carbamoyl phosphate</name>
        <dbReference type="ChEBI" id="CHEBI:58228"/>
    </ligand>
</feature>
<feature type="binding site" evidence="1">
    <location>
        <position position="145"/>
    </location>
    <ligand>
        <name>carbamoyl phosphate</name>
        <dbReference type="ChEBI" id="CHEBI:58228"/>
    </ligand>
</feature>
<feature type="binding site" evidence="1">
    <location>
        <position position="148"/>
    </location>
    <ligand>
        <name>carbamoyl phosphate</name>
        <dbReference type="ChEBI" id="CHEBI:58228"/>
    </ligand>
</feature>
<feature type="binding site" evidence="1">
    <location>
        <position position="178"/>
    </location>
    <ligand>
        <name>L-aspartate</name>
        <dbReference type="ChEBI" id="CHEBI:29991"/>
    </ligand>
</feature>
<feature type="binding site" evidence="1">
    <location>
        <position position="236"/>
    </location>
    <ligand>
        <name>L-aspartate</name>
        <dbReference type="ChEBI" id="CHEBI:29991"/>
    </ligand>
</feature>
<feature type="binding site" evidence="1">
    <location>
        <position position="277"/>
    </location>
    <ligand>
        <name>carbamoyl phosphate</name>
        <dbReference type="ChEBI" id="CHEBI:58228"/>
    </ligand>
</feature>
<feature type="binding site" evidence="1">
    <location>
        <position position="278"/>
    </location>
    <ligand>
        <name>carbamoyl phosphate</name>
        <dbReference type="ChEBI" id="CHEBI:58228"/>
    </ligand>
</feature>
<organism>
    <name type="scientific">Roseiflexus castenholzii (strain DSM 13941 / HLO8)</name>
    <dbReference type="NCBI Taxonomy" id="383372"/>
    <lineage>
        <taxon>Bacteria</taxon>
        <taxon>Bacillati</taxon>
        <taxon>Chloroflexota</taxon>
        <taxon>Chloroflexia</taxon>
        <taxon>Chloroflexales</taxon>
        <taxon>Roseiflexineae</taxon>
        <taxon>Roseiflexaceae</taxon>
        <taxon>Roseiflexus</taxon>
    </lineage>
</organism>
<accession>A7NLW6</accession>
<dbReference type="EC" id="2.1.3.2" evidence="1"/>
<dbReference type="EMBL" id="CP000804">
    <property type="protein sequence ID" value="ABU58514.1"/>
    <property type="molecule type" value="Genomic_DNA"/>
</dbReference>
<dbReference type="RefSeq" id="WP_012120938.1">
    <property type="nucleotide sequence ID" value="NC_009767.1"/>
</dbReference>
<dbReference type="SMR" id="A7NLW6"/>
<dbReference type="STRING" id="383372.Rcas_2434"/>
<dbReference type="KEGG" id="rca:Rcas_2434"/>
<dbReference type="eggNOG" id="COG0540">
    <property type="taxonomic scope" value="Bacteria"/>
</dbReference>
<dbReference type="HOGENOM" id="CLU_043846_2_0_0"/>
<dbReference type="OrthoDB" id="9774690at2"/>
<dbReference type="UniPathway" id="UPA00070">
    <property type="reaction ID" value="UER00116"/>
</dbReference>
<dbReference type="Proteomes" id="UP000000263">
    <property type="component" value="Chromosome"/>
</dbReference>
<dbReference type="GO" id="GO:0005829">
    <property type="term" value="C:cytosol"/>
    <property type="evidence" value="ECO:0007669"/>
    <property type="project" value="TreeGrafter"/>
</dbReference>
<dbReference type="GO" id="GO:0016597">
    <property type="term" value="F:amino acid binding"/>
    <property type="evidence" value="ECO:0007669"/>
    <property type="project" value="InterPro"/>
</dbReference>
<dbReference type="GO" id="GO:0004070">
    <property type="term" value="F:aspartate carbamoyltransferase activity"/>
    <property type="evidence" value="ECO:0007669"/>
    <property type="project" value="UniProtKB-UniRule"/>
</dbReference>
<dbReference type="GO" id="GO:0006207">
    <property type="term" value="P:'de novo' pyrimidine nucleobase biosynthetic process"/>
    <property type="evidence" value="ECO:0007669"/>
    <property type="project" value="InterPro"/>
</dbReference>
<dbReference type="GO" id="GO:0044205">
    <property type="term" value="P:'de novo' UMP biosynthetic process"/>
    <property type="evidence" value="ECO:0007669"/>
    <property type="project" value="UniProtKB-UniRule"/>
</dbReference>
<dbReference type="GO" id="GO:0006520">
    <property type="term" value="P:amino acid metabolic process"/>
    <property type="evidence" value="ECO:0007669"/>
    <property type="project" value="InterPro"/>
</dbReference>
<dbReference type="FunFam" id="3.40.50.1370:FF:000007">
    <property type="entry name" value="Aspartate carbamoyltransferase"/>
    <property type="match status" value="1"/>
</dbReference>
<dbReference type="Gene3D" id="3.40.50.1370">
    <property type="entry name" value="Aspartate/ornithine carbamoyltransferase"/>
    <property type="match status" value="2"/>
</dbReference>
<dbReference type="HAMAP" id="MF_00001">
    <property type="entry name" value="Asp_carb_tr"/>
    <property type="match status" value="1"/>
</dbReference>
<dbReference type="InterPro" id="IPR006132">
    <property type="entry name" value="Asp/Orn_carbamoyltranf_P-bd"/>
</dbReference>
<dbReference type="InterPro" id="IPR006130">
    <property type="entry name" value="Asp/Orn_carbamoylTrfase"/>
</dbReference>
<dbReference type="InterPro" id="IPR036901">
    <property type="entry name" value="Asp/Orn_carbamoylTrfase_sf"/>
</dbReference>
<dbReference type="InterPro" id="IPR002082">
    <property type="entry name" value="Asp_carbamoyltransf"/>
</dbReference>
<dbReference type="InterPro" id="IPR006131">
    <property type="entry name" value="Asp_carbamoyltransf_Asp/Orn-bd"/>
</dbReference>
<dbReference type="NCBIfam" id="TIGR00670">
    <property type="entry name" value="asp_carb_tr"/>
    <property type="match status" value="1"/>
</dbReference>
<dbReference type="NCBIfam" id="NF002032">
    <property type="entry name" value="PRK00856.1"/>
    <property type="match status" value="1"/>
</dbReference>
<dbReference type="PANTHER" id="PTHR45753:SF6">
    <property type="entry name" value="ASPARTATE CARBAMOYLTRANSFERASE"/>
    <property type="match status" value="1"/>
</dbReference>
<dbReference type="PANTHER" id="PTHR45753">
    <property type="entry name" value="ORNITHINE CARBAMOYLTRANSFERASE, MITOCHONDRIAL"/>
    <property type="match status" value="1"/>
</dbReference>
<dbReference type="Pfam" id="PF00185">
    <property type="entry name" value="OTCace"/>
    <property type="match status" value="1"/>
</dbReference>
<dbReference type="Pfam" id="PF02729">
    <property type="entry name" value="OTCace_N"/>
    <property type="match status" value="1"/>
</dbReference>
<dbReference type="PRINTS" id="PR00100">
    <property type="entry name" value="AOTCASE"/>
</dbReference>
<dbReference type="PRINTS" id="PR00101">
    <property type="entry name" value="ATCASE"/>
</dbReference>
<dbReference type="SUPFAM" id="SSF53671">
    <property type="entry name" value="Aspartate/ornithine carbamoyltransferase"/>
    <property type="match status" value="1"/>
</dbReference>
<dbReference type="PROSITE" id="PS00097">
    <property type="entry name" value="CARBAMOYLTRANSFERASE"/>
    <property type="match status" value="1"/>
</dbReference>
<protein>
    <recommendedName>
        <fullName evidence="1">Aspartate carbamoyltransferase catalytic subunit</fullName>
        <ecNumber evidence="1">2.1.3.2</ecNumber>
    </recommendedName>
    <alternativeName>
        <fullName evidence="1">Aspartate transcarbamylase</fullName>
        <shortName evidence="1">ATCase</shortName>
    </alternativeName>
</protein>
<sequence length="318" mass="34903">MSVPAAAGAARHRRRHVLDLDDFSAQEIDEILETAVSMKEVLGRAIKQVPTLRGKTIVNMFFEESTRTRISFELAGKALSANVVNFTARGSSVEKGESLIDTVRTLQALGADMLVMRHSESGAPYLVAQHFHGSVINAGDGRHAHPTQALLDLFTVRQRLGRIEGLKVVIVGDILHSRVARSDLWGFTRMGALVTLCAPQTLIGPEAFWKATWPDLTITSNLDECVRDADVIMTLRLQKERMEAGLLPSLREYTRFFAITAERVARAAPHCLVMHPGPMNEGVEIMPDVAVSAQSVIEEQVANGVAVRMALLYRLSGE</sequence>
<name>PYRB_ROSCS</name>
<keyword id="KW-0665">Pyrimidine biosynthesis</keyword>
<keyword id="KW-1185">Reference proteome</keyword>
<keyword id="KW-0808">Transferase</keyword>
<evidence type="ECO:0000255" key="1">
    <source>
        <dbReference type="HAMAP-Rule" id="MF_00001"/>
    </source>
</evidence>
<gene>
    <name evidence="1" type="primary">pyrB</name>
    <name type="ordered locus">Rcas_2434</name>
</gene>